<accession>Q7W0T5</accession>
<feature type="chain" id="PRO_0000170015" description="LexA repressor">
    <location>
        <begin position="1"/>
        <end position="216"/>
    </location>
</feature>
<feature type="DNA-binding region" description="H-T-H motif" evidence="1">
    <location>
        <begin position="29"/>
        <end position="49"/>
    </location>
</feature>
<feature type="active site" description="For autocatalytic cleavage activity" evidence="1">
    <location>
        <position position="134"/>
    </location>
</feature>
<feature type="active site" description="For autocatalytic cleavage activity" evidence="1">
    <location>
        <position position="171"/>
    </location>
</feature>
<feature type="site" description="Cleavage; by autolysis" evidence="1">
    <location>
        <begin position="99"/>
        <end position="100"/>
    </location>
</feature>
<name>LEXA_BORPA</name>
<comment type="function">
    <text evidence="1">Represses a number of genes involved in the response to DNA damage (SOS response), including recA and lexA. In the presence of single-stranded DNA, RecA interacts with LexA causing an autocatalytic cleavage which disrupts the DNA-binding part of LexA, leading to derepression of the SOS regulon and eventually DNA repair.</text>
</comment>
<comment type="catalytic activity">
    <reaction evidence="1">
        <text>Hydrolysis of Ala-|-Gly bond in repressor LexA.</text>
        <dbReference type="EC" id="3.4.21.88"/>
    </reaction>
</comment>
<comment type="subunit">
    <text evidence="1">Homodimer.</text>
</comment>
<comment type="similarity">
    <text evidence="1">Belongs to the peptidase S24 family.</text>
</comment>
<comment type="sequence caution" evidence="2">
    <conflict type="erroneous initiation">
        <sequence resource="EMBL-CDS" id="CAE37323"/>
    </conflict>
</comment>
<keyword id="KW-0068">Autocatalytic cleavage</keyword>
<keyword id="KW-0227">DNA damage</keyword>
<keyword id="KW-0234">DNA repair</keyword>
<keyword id="KW-0235">DNA replication</keyword>
<keyword id="KW-0238">DNA-binding</keyword>
<keyword id="KW-0378">Hydrolase</keyword>
<keyword id="KW-0678">Repressor</keyword>
<keyword id="KW-0742">SOS response</keyword>
<keyword id="KW-0804">Transcription</keyword>
<keyword id="KW-0805">Transcription regulation</keyword>
<gene>
    <name evidence="1" type="primary">lexA</name>
    <name type="ordered locus">BPP2023</name>
</gene>
<dbReference type="EC" id="3.4.21.88" evidence="1"/>
<dbReference type="EMBL" id="BX640429">
    <property type="protein sequence ID" value="CAE37323.1"/>
    <property type="status" value="ALT_INIT"/>
    <property type="molecule type" value="Genomic_DNA"/>
</dbReference>
<dbReference type="RefSeq" id="WP_041937182.1">
    <property type="nucleotide sequence ID" value="NC_002928.3"/>
</dbReference>
<dbReference type="SMR" id="Q7W0T5"/>
<dbReference type="MEROPS" id="S24.001"/>
<dbReference type="GeneID" id="93203797"/>
<dbReference type="KEGG" id="bpa:BPP2023"/>
<dbReference type="HOGENOM" id="CLU_066192_45_3_4"/>
<dbReference type="Proteomes" id="UP000001421">
    <property type="component" value="Chromosome"/>
</dbReference>
<dbReference type="GO" id="GO:0003677">
    <property type="term" value="F:DNA binding"/>
    <property type="evidence" value="ECO:0007669"/>
    <property type="project" value="UniProtKB-UniRule"/>
</dbReference>
<dbReference type="GO" id="GO:0004252">
    <property type="term" value="F:serine-type endopeptidase activity"/>
    <property type="evidence" value="ECO:0007669"/>
    <property type="project" value="UniProtKB-UniRule"/>
</dbReference>
<dbReference type="GO" id="GO:0006281">
    <property type="term" value="P:DNA repair"/>
    <property type="evidence" value="ECO:0007669"/>
    <property type="project" value="UniProtKB-UniRule"/>
</dbReference>
<dbReference type="GO" id="GO:0006260">
    <property type="term" value="P:DNA replication"/>
    <property type="evidence" value="ECO:0007669"/>
    <property type="project" value="UniProtKB-UniRule"/>
</dbReference>
<dbReference type="GO" id="GO:0045892">
    <property type="term" value="P:negative regulation of DNA-templated transcription"/>
    <property type="evidence" value="ECO:0007669"/>
    <property type="project" value="UniProtKB-UniRule"/>
</dbReference>
<dbReference type="GO" id="GO:0006508">
    <property type="term" value="P:proteolysis"/>
    <property type="evidence" value="ECO:0007669"/>
    <property type="project" value="InterPro"/>
</dbReference>
<dbReference type="GO" id="GO:0009432">
    <property type="term" value="P:SOS response"/>
    <property type="evidence" value="ECO:0007669"/>
    <property type="project" value="UniProtKB-UniRule"/>
</dbReference>
<dbReference type="CDD" id="cd06529">
    <property type="entry name" value="S24_LexA-like"/>
    <property type="match status" value="1"/>
</dbReference>
<dbReference type="FunFam" id="1.10.10.10:FF:000009">
    <property type="entry name" value="LexA repressor"/>
    <property type="match status" value="1"/>
</dbReference>
<dbReference type="FunFam" id="2.10.109.10:FF:000001">
    <property type="entry name" value="LexA repressor"/>
    <property type="match status" value="1"/>
</dbReference>
<dbReference type="Gene3D" id="2.10.109.10">
    <property type="entry name" value="Umud Fragment, subunit A"/>
    <property type="match status" value="1"/>
</dbReference>
<dbReference type="Gene3D" id="1.10.10.10">
    <property type="entry name" value="Winged helix-like DNA-binding domain superfamily/Winged helix DNA-binding domain"/>
    <property type="match status" value="1"/>
</dbReference>
<dbReference type="HAMAP" id="MF_00015">
    <property type="entry name" value="LexA"/>
    <property type="match status" value="1"/>
</dbReference>
<dbReference type="InterPro" id="IPR006200">
    <property type="entry name" value="LexA"/>
</dbReference>
<dbReference type="InterPro" id="IPR039418">
    <property type="entry name" value="LexA-like"/>
</dbReference>
<dbReference type="InterPro" id="IPR036286">
    <property type="entry name" value="LexA/Signal_pep-like_sf"/>
</dbReference>
<dbReference type="InterPro" id="IPR006199">
    <property type="entry name" value="LexA_DNA-bd_dom"/>
</dbReference>
<dbReference type="InterPro" id="IPR050077">
    <property type="entry name" value="LexA_repressor"/>
</dbReference>
<dbReference type="InterPro" id="IPR006197">
    <property type="entry name" value="Peptidase_S24_LexA"/>
</dbReference>
<dbReference type="InterPro" id="IPR015927">
    <property type="entry name" value="Peptidase_S24_S26A/B/C"/>
</dbReference>
<dbReference type="InterPro" id="IPR036388">
    <property type="entry name" value="WH-like_DNA-bd_sf"/>
</dbReference>
<dbReference type="InterPro" id="IPR036390">
    <property type="entry name" value="WH_DNA-bd_sf"/>
</dbReference>
<dbReference type="NCBIfam" id="TIGR00498">
    <property type="entry name" value="lexA"/>
    <property type="match status" value="1"/>
</dbReference>
<dbReference type="PANTHER" id="PTHR33516">
    <property type="entry name" value="LEXA REPRESSOR"/>
    <property type="match status" value="1"/>
</dbReference>
<dbReference type="PANTHER" id="PTHR33516:SF2">
    <property type="entry name" value="LEXA REPRESSOR-RELATED"/>
    <property type="match status" value="1"/>
</dbReference>
<dbReference type="Pfam" id="PF01726">
    <property type="entry name" value="LexA_DNA_bind"/>
    <property type="match status" value="1"/>
</dbReference>
<dbReference type="Pfam" id="PF00717">
    <property type="entry name" value="Peptidase_S24"/>
    <property type="match status" value="1"/>
</dbReference>
<dbReference type="PRINTS" id="PR00726">
    <property type="entry name" value="LEXASERPTASE"/>
</dbReference>
<dbReference type="SUPFAM" id="SSF51306">
    <property type="entry name" value="LexA/Signal peptidase"/>
    <property type="match status" value="1"/>
</dbReference>
<dbReference type="SUPFAM" id="SSF46785">
    <property type="entry name" value="Winged helix' DNA-binding domain"/>
    <property type="match status" value="1"/>
</dbReference>
<proteinExistence type="inferred from homology"/>
<evidence type="ECO:0000255" key="1">
    <source>
        <dbReference type="HAMAP-Rule" id="MF_00015"/>
    </source>
</evidence>
<evidence type="ECO:0000305" key="2"/>
<protein>
    <recommendedName>
        <fullName evidence="1">LexA repressor</fullName>
        <ecNumber evidence="1">3.4.21.88</ecNumber>
    </recommendedName>
</protein>
<sequence length="216" mass="23246">MATKLTERQQEILDLIRQTVARTGFPPTRAEIAQALGFRSPNAAEDHLKALARKGAIELTAGASRGIRLKVPDNAAPSAQLTHPLLAQLVLPLVGRVAAGSPILASEHVEREVGVDPGLFTQTPDYLLKVRGMSMRDAGILEGDLLAVKRAAEARNGQIVVARLGDEVTVKRLQRQNGRIELLPENPDFSPIVVANTDDFALEGIAVGLIRTQPLH</sequence>
<reference key="1">
    <citation type="journal article" date="2003" name="Nat. Genet.">
        <title>Comparative analysis of the genome sequences of Bordetella pertussis, Bordetella parapertussis and Bordetella bronchiseptica.</title>
        <authorList>
            <person name="Parkhill J."/>
            <person name="Sebaihia M."/>
            <person name="Preston A."/>
            <person name="Murphy L.D."/>
            <person name="Thomson N.R."/>
            <person name="Harris D.E."/>
            <person name="Holden M.T.G."/>
            <person name="Churcher C.M."/>
            <person name="Bentley S.D."/>
            <person name="Mungall K.L."/>
            <person name="Cerdeno-Tarraga A.-M."/>
            <person name="Temple L."/>
            <person name="James K.D."/>
            <person name="Harris B."/>
            <person name="Quail M.A."/>
            <person name="Achtman M."/>
            <person name="Atkin R."/>
            <person name="Baker S."/>
            <person name="Basham D."/>
            <person name="Bason N."/>
            <person name="Cherevach I."/>
            <person name="Chillingworth T."/>
            <person name="Collins M."/>
            <person name="Cronin A."/>
            <person name="Davis P."/>
            <person name="Doggett J."/>
            <person name="Feltwell T."/>
            <person name="Goble A."/>
            <person name="Hamlin N."/>
            <person name="Hauser H."/>
            <person name="Holroyd S."/>
            <person name="Jagels K."/>
            <person name="Leather S."/>
            <person name="Moule S."/>
            <person name="Norberczak H."/>
            <person name="O'Neil S."/>
            <person name="Ormond D."/>
            <person name="Price C."/>
            <person name="Rabbinowitsch E."/>
            <person name="Rutter S."/>
            <person name="Sanders M."/>
            <person name="Saunders D."/>
            <person name="Seeger K."/>
            <person name="Sharp S."/>
            <person name="Simmonds M."/>
            <person name="Skelton J."/>
            <person name="Squares R."/>
            <person name="Squares S."/>
            <person name="Stevens K."/>
            <person name="Unwin L."/>
            <person name="Whitehead S."/>
            <person name="Barrell B.G."/>
            <person name="Maskell D.J."/>
        </authorList>
    </citation>
    <scope>NUCLEOTIDE SEQUENCE [LARGE SCALE GENOMIC DNA]</scope>
    <source>
        <strain>12822 / ATCC BAA-587 / NCTC 13253</strain>
    </source>
</reference>
<organism>
    <name type="scientific">Bordetella parapertussis (strain 12822 / ATCC BAA-587 / NCTC 13253)</name>
    <dbReference type="NCBI Taxonomy" id="257311"/>
    <lineage>
        <taxon>Bacteria</taxon>
        <taxon>Pseudomonadati</taxon>
        <taxon>Pseudomonadota</taxon>
        <taxon>Betaproteobacteria</taxon>
        <taxon>Burkholderiales</taxon>
        <taxon>Alcaligenaceae</taxon>
        <taxon>Bordetella</taxon>
    </lineage>
</organism>